<dbReference type="EC" id="1.3.1.-" evidence="1"/>
<dbReference type="EMBL" id="AF040379">
    <property type="protein sequence ID" value="AAC77884.1"/>
    <property type="molecule type" value="Genomic_DNA"/>
</dbReference>
<dbReference type="RefSeq" id="WP_072063792.1">
    <property type="nucleotide sequence ID" value="NZ_NGVR01000028.1"/>
</dbReference>
<dbReference type="SMR" id="O52533"/>
<dbReference type="STRING" id="585.DR95_2014"/>
<dbReference type="GeneID" id="84586862"/>
<dbReference type="eggNOG" id="COG0042">
    <property type="taxonomic scope" value="Bacteria"/>
</dbReference>
<dbReference type="OrthoDB" id="9764501at2"/>
<dbReference type="GO" id="GO:0050660">
    <property type="term" value="F:flavin adenine dinucleotide binding"/>
    <property type="evidence" value="ECO:0007669"/>
    <property type="project" value="InterPro"/>
</dbReference>
<dbReference type="GO" id="GO:0010181">
    <property type="term" value="F:FMN binding"/>
    <property type="evidence" value="ECO:0007669"/>
    <property type="project" value="UniProtKB-UniRule"/>
</dbReference>
<dbReference type="GO" id="GO:0000049">
    <property type="term" value="F:tRNA binding"/>
    <property type="evidence" value="ECO:0007669"/>
    <property type="project" value="UniProtKB-UniRule"/>
</dbReference>
<dbReference type="GO" id="GO:0017150">
    <property type="term" value="F:tRNA dihydrouridine synthase activity"/>
    <property type="evidence" value="ECO:0007669"/>
    <property type="project" value="UniProtKB-UniRule"/>
</dbReference>
<dbReference type="CDD" id="cd02801">
    <property type="entry name" value="DUS_like_FMN"/>
    <property type="match status" value="1"/>
</dbReference>
<dbReference type="FunFam" id="1.10.1200.80:FF:000001">
    <property type="entry name" value="tRNA-dihydrouridine synthase B"/>
    <property type="match status" value="1"/>
</dbReference>
<dbReference type="FunFam" id="3.20.20.70:FF:000051">
    <property type="entry name" value="tRNA-dihydrouridine synthase B"/>
    <property type="match status" value="1"/>
</dbReference>
<dbReference type="Gene3D" id="3.20.20.70">
    <property type="entry name" value="Aldolase class I"/>
    <property type="match status" value="1"/>
</dbReference>
<dbReference type="Gene3D" id="1.10.1200.80">
    <property type="entry name" value="Putative flavin oxidoreducatase, domain 2"/>
    <property type="match status" value="1"/>
</dbReference>
<dbReference type="HAMAP" id="MF_02042">
    <property type="entry name" value="DusB_subfam"/>
    <property type="match status" value="1"/>
</dbReference>
<dbReference type="InterPro" id="IPR013785">
    <property type="entry name" value="Aldolase_TIM"/>
</dbReference>
<dbReference type="InterPro" id="IPR035587">
    <property type="entry name" value="DUS-like_FMN-bd"/>
</dbReference>
<dbReference type="InterPro" id="IPR001269">
    <property type="entry name" value="DUS_fam"/>
</dbReference>
<dbReference type="InterPro" id="IPR032887">
    <property type="entry name" value="DusB"/>
</dbReference>
<dbReference type="InterPro" id="IPR004652">
    <property type="entry name" value="DusB-like"/>
</dbReference>
<dbReference type="InterPro" id="IPR024036">
    <property type="entry name" value="tRNA-dHydroUridine_Synthase_C"/>
</dbReference>
<dbReference type="InterPro" id="IPR018517">
    <property type="entry name" value="tRNA_hU_synthase_CS"/>
</dbReference>
<dbReference type="NCBIfam" id="TIGR00737">
    <property type="entry name" value="nifR3_yhdG"/>
    <property type="match status" value="1"/>
</dbReference>
<dbReference type="PANTHER" id="PTHR45846">
    <property type="entry name" value="TRNA-DIHYDROURIDINE(47) SYNTHASE [NAD(P)(+)]-LIKE"/>
    <property type="match status" value="1"/>
</dbReference>
<dbReference type="PANTHER" id="PTHR45846:SF1">
    <property type="entry name" value="TRNA-DIHYDROURIDINE(47) SYNTHASE [NAD(P)(+)]-LIKE"/>
    <property type="match status" value="1"/>
</dbReference>
<dbReference type="Pfam" id="PF01207">
    <property type="entry name" value="Dus"/>
    <property type="match status" value="1"/>
</dbReference>
<dbReference type="PIRSF" id="PIRSF006621">
    <property type="entry name" value="Dus"/>
    <property type="match status" value="1"/>
</dbReference>
<dbReference type="SUPFAM" id="SSF51395">
    <property type="entry name" value="FMN-linked oxidoreductases"/>
    <property type="match status" value="1"/>
</dbReference>
<dbReference type="PROSITE" id="PS01136">
    <property type="entry name" value="UPF0034"/>
    <property type="match status" value="1"/>
</dbReference>
<comment type="function">
    <text evidence="1">Catalyzes the synthesis of 5,6-dihydrouridine (D), a modified base found in the D-loop of most tRNAs, via the reduction of the C5-C6 double bond in target uridines.</text>
</comment>
<comment type="catalytic activity">
    <reaction evidence="1">
        <text>a 5,6-dihydrouridine in tRNA + NAD(+) = a uridine in tRNA + NADH + H(+)</text>
        <dbReference type="Rhea" id="RHEA:54452"/>
        <dbReference type="Rhea" id="RHEA-COMP:13339"/>
        <dbReference type="Rhea" id="RHEA-COMP:13887"/>
        <dbReference type="ChEBI" id="CHEBI:15378"/>
        <dbReference type="ChEBI" id="CHEBI:57540"/>
        <dbReference type="ChEBI" id="CHEBI:57945"/>
        <dbReference type="ChEBI" id="CHEBI:65315"/>
        <dbReference type="ChEBI" id="CHEBI:74443"/>
    </reaction>
</comment>
<comment type="catalytic activity">
    <reaction evidence="1">
        <text>a 5,6-dihydrouridine in tRNA + NADP(+) = a uridine in tRNA + NADPH + H(+)</text>
        <dbReference type="Rhea" id="RHEA:23624"/>
        <dbReference type="Rhea" id="RHEA-COMP:13339"/>
        <dbReference type="Rhea" id="RHEA-COMP:13887"/>
        <dbReference type="ChEBI" id="CHEBI:15378"/>
        <dbReference type="ChEBI" id="CHEBI:57783"/>
        <dbReference type="ChEBI" id="CHEBI:58349"/>
        <dbReference type="ChEBI" id="CHEBI:65315"/>
        <dbReference type="ChEBI" id="CHEBI:74443"/>
    </reaction>
</comment>
<comment type="cofactor">
    <cofactor evidence="1">
        <name>FMN</name>
        <dbReference type="ChEBI" id="CHEBI:58210"/>
    </cofactor>
</comment>
<comment type="similarity">
    <text evidence="1">Belongs to the Dus family. DusB subfamily.</text>
</comment>
<keyword id="KW-0285">Flavoprotein</keyword>
<keyword id="KW-0288">FMN</keyword>
<keyword id="KW-0521">NADP</keyword>
<keyword id="KW-0560">Oxidoreductase</keyword>
<keyword id="KW-0694">RNA-binding</keyword>
<keyword id="KW-0819">tRNA processing</keyword>
<keyword id="KW-0820">tRNA-binding</keyword>
<gene>
    <name evidence="1" type="primary">dusB</name>
</gene>
<organism>
    <name type="scientific">Proteus vulgaris</name>
    <dbReference type="NCBI Taxonomy" id="585"/>
    <lineage>
        <taxon>Bacteria</taxon>
        <taxon>Pseudomonadati</taxon>
        <taxon>Pseudomonadota</taxon>
        <taxon>Gammaproteobacteria</taxon>
        <taxon>Enterobacterales</taxon>
        <taxon>Morganellaceae</taxon>
        <taxon>Proteus</taxon>
    </lineage>
</organism>
<feature type="chain" id="PRO_0000162092" description="tRNA-dihydrouridine synthase B">
    <location>
        <begin position="1"/>
        <end position="323"/>
    </location>
</feature>
<feature type="active site" description="Proton donor" evidence="1">
    <location>
        <position position="100"/>
    </location>
</feature>
<feature type="binding site" evidence="1">
    <location>
        <begin position="16"/>
        <end position="18"/>
    </location>
    <ligand>
        <name>FMN</name>
        <dbReference type="ChEBI" id="CHEBI:58210"/>
    </ligand>
</feature>
<feature type="binding site" evidence="1">
    <location>
        <position position="70"/>
    </location>
    <ligand>
        <name>FMN</name>
        <dbReference type="ChEBI" id="CHEBI:58210"/>
    </ligand>
</feature>
<feature type="binding site" evidence="1">
    <location>
        <position position="139"/>
    </location>
    <ligand>
        <name>FMN</name>
        <dbReference type="ChEBI" id="CHEBI:58210"/>
    </ligand>
</feature>
<feature type="binding site" evidence="1">
    <location>
        <begin position="200"/>
        <end position="202"/>
    </location>
    <ligand>
        <name>FMN</name>
        <dbReference type="ChEBI" id="CHEBI:58210"/>
    </ligand>
</feature>
<feature type="binding site" evidence="1">
    <location>
        <begin position="224"/>
        <end position="225"/>
    </location>
    <ligand>
        <name>FMN</name>
        <dbReference type="ChEBI" id="CHEBI:58210"/>
    </ligand>
</feature>
<evidence type="ECO:0000255" key="1">
    <source>
        <dbReference type="HAMAP-Rule" id="MF_02042"/>
    </source>
</evidence>
<name>DUSB_PROVU</name>
<protein>
    <recommendedName>
        <fullName evidence="1">tRNA-dihydrouridine synthase B</fullName>
        <ecNumber evidence="1">1.3.1.-</ecNumber>
    </recommendedName>
</protein>
<accession>O52533</accession>
<reference key="1">
    <citation type="journal article" date="1998" name="J. Bacteriol.">
        <title>Identification and characterization of the fis operon in enteric bacteria.</title>
        <authorList>
            <person name="Beach M.B."/>
            <person name="Osuna R."/>
        </authorList>
    </citation>
    <scope>NUCLEOTIDE SEQUENCE [GENOMIC DNA]</scope>
</reference>
<sequence>MRIGQYQLKNCLIAAPMAGVTDRPFRSLCYDMGAGMTVSEMLSSNPQVWQTDKSRLRMVHSDELGIRSVQIAGSDPVDMAAAAKINADSGAQIIDINMGCPAKKVNKKLAGSALLRHPDLVAEILSAVVNAVDVPVTLKIRTGWSPDERNCVEIAKLAERCGIQALTIHGRTRECLFKGEAEYDSIRTVKQNVSIPIIANGDITDPLKARAVLDYTGADALMIGRAAQGRPWIFREIQHYLDTGELLPPLPIAEVQQIMQKHVRELHDFYGQGKGTRIARKHVSWYLKEHAPDDQFRRSFNAIEDASEQLEALEAYFENFLRK</sequence>
<proteinExistence type="inferred from homology"/>